<proteinExistence type="evidence at protein level"/>
<accession>P63089</accession>
<accession>P20935</accession>
<feature type="signal peptide">
    <location>
        <begin position="1"/>
        <end position="32"/>
    </location>
</feature>
<feature type="chain" id="PRO_0000024660" description="Pleiotrophin">
    <location>
        <begin position="33"/>
        <end position="168"/>
    </location>
</feature>
<feature type="region of interest" description="Chondroitin sulfate binding" evidence="1">
    <location>
        <begin position="92"/>
        <end position="99"/>
    </location>
</feature>
<feature type="region of interest" description="Chondroitin sulfate binding" evidence="1">
    <location>
        <begin position="123"/>
        <end position="131"/>
    </location>
</feature>
<feature type="region of interest" description="Disordered" evidence="4">
    <location>
        <begin position="139"/>
        <end position="168"/>
    </location>
</feature>
<feature type="region of interest" description="Chondroitin sulfate A binding" evidence="1">
    <location>
        <begin position="147"/>
        <end position="168"/>
    </location>
</feature>
<feature type="disulfide bond" evidence="1">
    <location>
        <begin position="47"/>
        <end position="76"/>
    </location>
</feature>
<feature type="disulfide bond" evidence="1">
    <location>
        <begin position="55"/>
        <end position="85"/>
    </location>
</feature>
<feature type="disulfide bond" evidence="1">
    <location>
        <begin position="62"/>
        <end position="89"/>
    </location>
</feature>
<feature type="disulfide bond" evidence="1">
    <location>
        <begin position="99"/>
        <end position="131"/>
    </location>
</feature>
<feature type="disulfide bond" evidence="1">
    <location>
        <begin position="109"/>
        <end position="141"/>
    </location>
</feature>
<dbReference type="EMBL" id="D90225">
    <property type="protein sequence ID" value="BAA14260.1"/>
    <property type="molecule type" value="mRNA"/>
</dbReference>
<dbReference type="EMBL" id="S52357">
    <property type="protein sequence ID" value="AAB24477.1"/>
    <property type="molecule type" value="Genomic_DNA"/>
</dbReference>
<dbReference type="EMBL" id="S52338">
    <property type="protein sequence ID" value="AAB24477.1"/>
    <property type="status" value="JOINED"/>
    <property type="molecule type" value="Genomic_DNA"/>
</dbReference>
<dbReference type="EMBL" id="S52345">
    <property type="protein sequence ID" value="AAB24477.1"/>
    <property type="status" value="JOINED"/>
    <property type="molecule type" value="Genomic_DNA"/>
</dbReference>
<dbReference type="EMBL" id="S52353">
    <property type="protein sequence ID" value="AAB24477.1"/>
    <property type="status" value="JOINED"/>
    <property type="molecule type" value="Genomic_DNA"/>
</dbReference>
<dbReference type="EMBL" id="AK011346">
    <property type="protein sequence ID" value="BAB27557.1"/>
    <property type="molecule type" value="mRNA"/>
</dbReference>
<dbReference type="EMBL" id="BC002064">
    <property type="protein sequence ID" value="AAH02064.1"/>
    <property type="molecule type" value="mRNA"/>
</dbReference>
<dbReference type="EMBL" id="BC061695">
    <property type="protein sequence ID" value="AAH61695.1"/>
    <property type="molecule type" value="mRNA"/>
</dbReference>
<dbReference type="EMBL" id="S88460">
    <property type="status" value="NOT_ANNOTATED_CDS"/>
    <property type="molecule type" value="Genomic_DNA"/>
</dbReference>
<dbReference type="EMBL" id="S88462">
    <property type="status" value="NOT_ANNOTATED_CDS"/>
    <property type="molecule type" value="Genomic_DNA"/>
</dbReference>
<dbReference type="EMBL" id="S88464">
    <property type="status" value="NOT_ANNOTATED_CDS"/>
    <property type="molecule type" value="Genomic_DNA"/>
</dbReference>
<dbReference type="EMBL" id="S88466">
    <property type="status" value="NOT_ANNOTATED_CDS"/>
    <property type="molecule type" value="Genomic_DNA"/>
</dbReference>
<dbReference type="EMBL" id="S88468">
    <property type="status" value="NOT_ANNOTATED_CDS"/>
    <property type="molecule type" value="Genomic_DNA"/>
</dbReference>
<dbReference type="CCDS" id="CCDS20005.1"/>
<dbReference type="PIR" id="A37087">
    <property type="entry name" value="A37087"/>
</dbReference>
<dbReference type="RefSeq" id="NP_001397202.1">
    <property type="nucleotide sequence ID" value="NM_001410273.1"/>
</dbReference>
<dbReference type="RefSeq" id="NP_032999.1">
    <property type="nucleotide sequence ID" value="NM_008973.3"/>
</dbReference>
<dbReference type="RefSeq" id="XP_006505820.2">
    <property type="nucleotide sequence ID" value="XM_006505757.3"/>
</dbReference>
<dbReference type="SMR" id="P63089"/>
<dbReference type="BioGRID" id="202472">
    <property type="interactions" value="8"/>
</dbReference>
<dbReference type="FunCoup" id="P63089">
    <property type="interactions" value="47"/>
</dbReference>
<dbReference type="IntAct" id="P63089">
    <property type="interactions" value="1"/>
</dbReference>
<dbReference type="STRING" id="10090.ENSMUSP00000099073"/>
<dbReference type="PhosphoSitePlus" id="P63089"/>
<dbReference type="SwissPalm" id="P63089"/>
<dbReference type="jPOST" id="P63089"/>
<dbReference type="PaxDb" id="10090-ENSMUSP00000099073"/>
<dbReference type="ProteomicsDB" id="301960"/>
<dbReference type="Pumba" id="P63089"/>
<dbReference type="Antibodypedia" id="4323">
    <property type="antibodies" value="557 antibodies from 40 providers"/>
</dbReference>
<dbReference type="DNASU" id="19242"/>
<dbReference type="Ensembl" id="ENSMUST00000101534.5">
    <property type="protein sequence ID" value="ENSMUSP00000099073.2"/>
    <property type="gene ID" value="ENSMUSG00000029838.12"/>
</dbReference>
<dbReference type="GeneID" id="19242"/>
<dbReference type="KEGG" id="mmu:19242"/>
<dbReference type="UCSC" id="uc009bja.1">
    <property type="organism name" value="mouse"/>
</dbReference>
<dbReference type="AGR" id="MGI:97804"/>
<dbReference type="CTD" id="5764"/>
<dbReference type="MGI" id="MGI:97804">
    <property type="gene designation" value="Ptn"/>
</dbReference>
<dbReference type="VEuPathDB" id="HostDB:ENSMUSG00000029838"/>
<dbReference type="eggNOG" id="ENOG502RXV7">
    <property type="taxonomic scope" value="Eukaryota"/>
</dbReference>
<dbReference type="GeneTree" id="ENSGT00390000007640"/>
<dbReference type="HOGENOM" id="CLU_136864_1_0_1"/>
<dbReference type="InParanoid" id="P63089"/>
<dbReference type="OMA" id="MNGLKQW"/>
<dbReference type="OrthoDB" id="8818336at2759"/>
<dbReference type="PhylomeDB" id="P63089"/>
<dbReference type="TreeFam" id="TF332376"/>
<dbReference type="Reactome" id="R-MMU-201556">
    <property type="pathway name" value="Signaling by ALK"/>
</dbReference>
<dbReference type="Reactome" id="R-MMU-9851151">
    <property type="pathway name" value="MDK and PTN in ALK signaling"/>
</dbReference>
<dbReference type="BioGRID-ORCS" id="19242">
    <property type="hits" value="0 hits in 76 CRISPR screens"/>
</dbReference>
<dbReference type="CD-CODE" id="CE726F99">
    <property type="entry name" value="Postsynaptic density"/>
</dbReference>
<dbReference type="ChiTaRS" id="Ptn">
    <property type="organism name" value="mouse"/>
</dbReference>
<dbReference type="PRO" id="PR:P63089"/>
<dbReference type="Proteomes" id="UP000000589">
    <property type="component" value="Chromosome 6"/>
</dbReference>
<dbReference type="RNAct" id="P63089">
    <property type="molecule type" value="protein"/>
</dbReference>
<dbReference type="Bgee" id="ENSMUSG00000029838">
    <property type="expression patterns" value="Expressed in embryonic brain and 259 other cell types or tissues"/>
</dbReference>
<dbReference type="ExpressionAtlas" id="P63089">
    <property type="expression patterns" value="baseline and differential"/>
</dbReference>
<dbReference type="GO" id="GO:0005783">
    <property type="term" value="C:endoplasmic reticulum"/>
    <property type="evidence" value="ECO:0007669"/>
    <property type="project" value="Ensembl"/>
</dbReference>
<dbReference type="GO" id="GO:0031012">
    <property type="term" value="C:extracellular matrix"/>
    <property type="evidence" value="ECO:0000304"/>
    <property type="project" value="MGI"/>
</dbReference>
<dbReference type="GO" id="GO:0005576">
    <property type="term" value="C:extracellular region"/>
    <property type="evidence" value="ECO:0000314"/>
    <property type="project" value="UniProtKB"/>
</dbReference>
<dbReference type="GO" id="GO:0005615">
    <property type="term" value="C:extracellular space"/>
    <property type="evidence" value="ECO:0000250"/>
    <property type="project" value="UniProtKB"/>
</dbReference>
<dbReference type="GO" id="GO:0005886">
    <property type="term" value="C:plasma membrane"/>
    <property type="evidence" value="ECO:0007669"/>
    <property type="project" value="GOC"/>
</dbReference>
<dbReference type="GO" id="GO:0032991">
    <property type="term" value="C:protein-containing complex"/>
    <property type="evidence" value="ECO:0007669"/>
    <property type="project" value="Ensembl"/>
</dbReference>
<dbReference type="GO" id="GO:0098685">
    <property type="term" value="C:Schaffer collateral - CA1 synapse"/>
    <property type="evidence" value="ECO:0000314"/>
    <property type="project" value="SynGO"/>
</dbReference>
<dbReference type="GO" id="GO:0035374">
    <property type="term" value="F:chondroitin sulfate binding"/>
    <property type="evidence" value="ECO:0000250"/>
    <property type="project" value="UniProtKB"/>
</dbReference>
<dbReference type="GO" id="GO:0008083">
    <property type="term" value="F:growth factor activity"/>
    <property type="evidence" value="ECO:0000250"/>
    <property type="project" value="UniProtKB"/>
</dbReference>
<dbReference type="GO" id="GO:0008201">
    <property type="term" value="F:heparin binding"/>
    <property type="evidence" value="ECO:0000250"/>
    <property type="project" value="UniProtKB"/>
</dbReference>
<dbReference type="GO" id="GO:0005178">
    <property type="term" value="F:integrin binding"/>
    <property type="evidence" value="ECO:0007669"/>
    <property type="project" value="Ensembl"/>
</dbReference>
<dbReference type="GO" id="GO:0019901">
    <property type="term" value="F:protein kinase binding"/>
    <property type="evidence" value="ECO:0007669"/>
    <property type="project" value="Ensembl"/>
</dbReference>
<dbReference type="GO" id="GO:0004864">
    <property type="term" value="F:protein phosphatase inhibitor activity"/>
    <property type="evidence" value="ECO:0000250"/>
    <property type="project" value="UniProtKB"/>
</dbReference>
<dbReference type="GO" id="GO:0030282">
    <property type="term" value="P:bone mineralization"/>
    <property type="evidence" value="ECO:0000314"/>
    <property type="project" value="MGI"/>
</dbReference>
<dbReference type="GO" id="GO:0046697">
    <property type="term" value="P:decidualization"/>
    <property type="evidence" value="ECO:0000315"/>
    <property type="project" value="UniProtKB"/>
</dbReference>
<dbReference type="GO" id="GO:0140059">
    <property type="term" value="P:dendrite arborization"/>
    <property type="evidence" value="ECO:0000315"/>
    <property type="project" value="UniProtKB"/>
</dbReference>
<dbReference type="GO" id="GO:0031104">
    <property type="term" value="P:dendrite regeneration"/>
    <property type="evidence" value="ECO:0000250"/>
    <property type="project" value="UniProtKB"/>
</dbReference>
<dbReference type="GO" id="GO:0044849">
    <property type="term" value="P:estrous cycle"/>
    <property type="evidence" value="ECO:0000315"/>
    <property type="project" value="UniProtKB"/>
</dbReference>
<dbReference type="GO" id="GO:0007229">
    <property type="term" value="P:integrin-mediated signaling pathway"/>
    <property type="evidence" value="ECO:0000250"/>
    <property type="project" value="UniProtKB"/>
</dbReference>
<dbReference type="GO" id="GO:0007612">
    <property type="term" value="P:learning"/>
    <property type="evidence" value="ECO:0000315"/>
    <property type="project" value="UniProtKB"/>
</dbReference>
<dbReference type="GO" id="GO:0002232">
    <property type="term" value="P:leukocyte chemotaxis involved in inflammatory response"/>
    <property type="evidence" value="ECO:0000315"/>
    <property type="project" value="UniProtKB"/>
</dbReference>
<dbReference type="GO" id="GO:0007613">
    <property type="term" value="P:memory"/>
    <property type="evidence" value="ECO:0000315"/>
    <property type="project" value="UniProtKB"/>
</dbReference>
<dbReference type="GO" id="GO:0050804">
    <property type="term" value="P:modulation of chemical synaptic transmission"/>
    <property type="evidence" value="ECO:0000314"/>
    <property type="project" value="SynGO"/>
</dbReference>
<dbReference type="GO" id="GO:1900272">
    <property type="term" value="P:negative regulation of long-term synaptic potentiation"/>
    <property type="evidence" value="ECO:0000315"/>
    <property type="project" value="UniProtKB"/>
</dbReference>
<dbReference type="GO" id="GO:0007406">
    <property type="term" value="P:negative regulation of neuroblast proliferation"/>
    <property type="evidence" value="ECO:0000315"/>
    <property type="project" value="UniProtKB"/>
</dbReference>
<dbReference type="GO" id="GO:0048477">
    <property type="term" value="P:oogenesis"/>
    <property type="evidence" value="ECO:0000315"/>
    <property type="project" value="UniProtKB"/>
</dbReference>
<dbReference type="GO" id="GO:0001503">
    <property type="term" value="P:ossification"/>
    <property type="evidence" value="ECO:0000314"/>
    <property type="project" value="MGI"/>
</dbReference>
<dbReference type="GO" id="GO:0043932">
    <property type="term" value="P:ossification involved in bone remodeling"/>
    <property type="evidence" value="ECO:0000250"/>
    <property type="project" value="UniProtKB"/>
</dbReference>
<dbReference type="GO" id="GO:0048680">
    <property type="term" value="P:positive regulation of axon regeneration"/>
    <property type="evidence" value="ECO:0000250"/>
    <property type="project" value="UniProtKB"/>
</dbReference>
<dbReference type="GO" id="GO:0030501">
    <property type="term" value="P:positive regulation of bone mineralization"/>
    <property type="evidence" value="ECO:0000315"/>
    <property type="project" value="UniProtKB"/>
</dbReference>
<dbReference type="GO" id="GO:0045597">
    <property type="term" value="P:positive regulation of cell differentiation"/>
    <property type="evidence" value="ECO:0000315"/>
    <property type="project" value="UniProtKB"/>
</dbReference>
<dbReference type="GO" id="GO:0051781">
    <property type="term" value="P:positive regulation of cell division"/>
    <property type="evidence" value="ECO:0007669"/>
    <property type="project" value="UniProtKB-KW"/>
</dbReference>
<dbReference type="GO" id="GO:0008284">
    <property type="term" value="P:positive regulation of cell population proliferation"/>
    <property type="evidence" value="ECO:0000250"/>
    <property type="project" value="UniProtKB"/>
</dbReference>
<dbReference type="GO" id="GO:1900006">
    <property type="term" value="P:positive regulation of dendrite development"/>
    <property type="evidence" value="ECO:0000315"/>
    <property type="project" value="UniProtKB"/>
</dbReference>
<dbReference type="GO" id="GO:2000347">
    <property type="term" value="P:positive regulation of hepatocyte proliferation"/>
    <property type="evidence" value="ECO:0000315"/>
    <property type="project" value="UniProtKB"/>
</dbReference>
<dbReference type="GO" id="GO:0002690">
    <property type="term" value="P:positive regulation of leukocyte chemotaxis"/>
    <property type="evidence" value="ECO:0000315"/>
    <property type="project" value="UniProtKB"/>
</dbReference>
<dbReference type="GO" id="GO:0010976">
    <property type="term" value="P:positive regulation of neuron projection development"/>
    <property type="evidence" value="ECO:0000250"/>
    <property type="project" value="UniProtKB"/>
</dbReference>
<dbReference type="GO" id="GO:0048714">
    <property type="term" value="P:positive regulation of oligodendrocyte differentiation"/>
    <property type="evidence" value="ECO:0000250"/>
    <property type="project" value="UniProtKB"/>
</dbReference>
<dbReference type="GO" id="GO:0045778">
    <property type="term" value="P:positive regulation of ossification"/>
    <property type="evidence" value="ECO:0000250"/>
    <property type="project" value="UniProtKB"/>
</dbReference>
<dbReference type="GO" id="GO:2000738">
    <property type="term" value="P:positive regulation of stem cell differentiation"/>
    <property type="evidence" value="ECO:0000315"/>
    <property type="project" value="UniProtKB"/>
</dbReference>
<dbReference type="GO" id="GO:0043113">
    <property type="term" value="P:receptor clustering"/>
    <property type="evidence" value="ECO:0000250"/>
    <property type="project" value="UniProtKB"/>
</dbReference>
<dbReference type="GO" id="GO:0010594">
    <property type="term" value="P:regulation of endothelial cell migration"/>
    <property type="evidence" value="ECO:0000250"/>
    <property type="project" value="UniProtKB"/>
</dbReference>
<dbReference type="GO" id="GO:1903706">
    <property type="term" value="P:regulation of hemopoiesis"/>
    <property type="evidence" value="ECO:0000315"/>
    <property type="project" value="UniProtKB"/>
</dbReference>
<dbReference type="GO" id="GO:0031641">
    <property type="term" value="P:regulation of myelination"/>
    <property type="evidence" value="ECO:0000315"/>
    <property type="project" value="UniProtKB"/>
</dbReference>
<dbReference type="GO" id="GO:2000036">
    <property type="term" value="P:regulation of stem cell population maintenance"/>
    <property type="evidence" value="ECO:0000315"/>
    <property type="project" value="UniProtKB"/>
</dbReference>
<dbReference type="GO" id="GO:0048167">
    <property type="term" value="P:regulation of synaptic plasticity"/>
    <property type="evidence" value="ECO:0000315"/>
    <property type="project" value="UniProtKB"/>
</dbReference>
<dbReference type="GO" id="GO:0010996">
    <property type="term" value="P:response to auditory stimulus"/>
    <property type="evidence" value="ECO:0000315"/>
    <property type="project" value="UniProtKB"/>
</dbReference>
<dbReference type="GO" id="GO:0042246">
    <property type="term" value="P:tissue regeneration"/>
    <property type="evidence" value="ECO:0000315"/>
    <property type="project" value="UniProtKB"/>
</dbReference>
<dbReference type="FunFam" id="2.20.60.10:FF:000001">
    <property type="entry name" value="Pleiotrophin"/>
    <property type="match status" value="1"/>
</dbReference>
<dbReference type="FunFam" id="2.30.90.10:FF:000001">
    <property type="entry name" value="Pleiotrophin"/>
    <property type="match status" value="1"/>
</dbReference>
<dbReference type="Gene3D" id="2.30.90.10">
    <property type="entry name" value="Heparin-binding Growth Factor, Midkine, Chain A- C-terminal Domain"/>
    <property type="match status" value="1"/>
</dbReference>
<dbReference type="Gene3D" id="2.20.60.10">
    <property type="entry name" value="Pleiotrophin/Midkine, N-terminal domain"/>
    <property type="match status" value="1"/>
</dbReference>
<dbReference type="InterPro" id="IPR000762">
    <property type="entry name" value="Midkine_heparin-bd_GF"/>
</dbReference>
<dbReference type="InterPro" id="IPR020090">
    <property type="entry name" value="PTN/MK_C_dom"/>
</dbReference>
<dbReference type="InterPro" id="IPR038130">
    <property type="entry name" value="PTN/MK_C_dom_sf"/>
</dbReference>
<dbReference type="InterPro" id="IPR020091">
    <property type="entry name" value="PTN/MK_diS_sf"/>
</dbReference>
<dbReference type="InterPro" id="IPR020089">
    <property type="entry name" value="PTN/MK_N_dom"/>
</dbReference>
<dbReference type="InterPro" id="IPR037122">
    <property type="entry name" value="PTN/MK_N_dom_sf"/>
</dbReference>
<dbReference type="InterPro" id="IPR020092">
    <property type="entry name" value="PTN_MK_heparin-bd_GF_CS"/>
</dbReference>
<dbReference type="PANTHER" id="PTHR13850:SF1">
    <property type="entry name" value="PLEIOTROPHIN"/>
    <property type="match status" value="1"/>
</dbReference>
<dbReference type="PANTHER" id="PTHR13850">
    <property type="entry name" value="PLEIOTROPHIN FAMILY MEMBER"/>
    <property type="match status" value="1"/>
</dbReference>
<dbReference type="Pfam" id="PF01091">
    <property type="entry name" value="PTN_MK_C"/>
    <property type="match status" value="1"/>
</dbReference>
<dbReference type="Pfam" id="PF05196">
    <property type="entry name" value="PTN_MK_N"/>
    <property type="match status" value="1"/>
</dbReference>
<dbReference type="PRINTS" id="PR00269">
    <property type="entry name" value="PTNMIDKINE"/>
</dbReference>
<dbReference type="SMART" id="SM00193">
    <property type="entry name" value="PTN"/>
    <property type="match status" value="1"/>
</dbReference>
<dbReference type="SUPFAM" id="SSF57288">
    <property type="entry name" value="Midkine"/>
    <property type="match status" value="2"/>
</dbReference>
<dbReference type="PROSITE" id="PS00619">
    <property type="entry name" value="PTN_MK_1"/>
    <property type="match status" value="1"/>
</dbReference>
<dbReference type="PROSITE" id="PS00620">
    <property type="entry name" value="PTN_MK_2"/>
    <property type="match status" value="1"/>
</dbReference>
<comment type="function">
    <text evidence="1 3 5 7 8 10 12 13 14 15 16 17">Secreted growth factor that mediates its signal through cell-surface proteoglycan and non-proteoglycan receptors (By similarity). Binds cell-surface proteoglycan receptor via their chondroitin sulfate (CS) groups (By similarity). Thereby regulates many processes like cell proliferation, cell survival, cell growth, cell differentiation and cell migration in several tissues namely neuron and bone (PubMed:15121180, PubMed:19442624, PubMed:27445335, PubMed:30497772). Also plays a role in synaptic plasticity and learning-related behavior by inhibiting long-term synaptic potentiation (PubMed:11414790, PubMed:25000129). Binds PTPRZ1, leading to neutralization of the negative charges of the CS chains of PTPRZ1, inducing PTPRZ1 clustering, thereby causing the dimerization and inactivation of its phosphatase activity leading to increased tyrosine phosphorylation of each of the PTPRZ1 substrates like ALK or AFAP1L2 in order to activate the PI3K-AKT pathway (PubMed:27445335). Through PTPRZ1 binding controls oligodendrocyte precursor cell differentiation by enhancing the phosphorylation of AFAP1L2 in order to activate the PI3K-AKT pathway (PubMed:27445335). Forms a complex with PTPRZ1 and integrin alpha-V/beta-3 (ITGAV:ITGB3) that stimulates endothelial cell migration through SRC dephosphorylation and activation that consequently leads to ITGB3 'Tyr-773' phosphorylation (By similarity). In adult hippocampus promotes dendritic arborization, spine development, and functional integration and connectivity of newborn granule neurons through ALK by activating AKT signaling pathway (PubMed:30497772). Binds GPC2 and chondroitin sulfate proteoglycans (CSPGs) at the neuron surface, leading to abrogation of binding between PTPRS and CSPGs and neurite outgrowth promotion (By similarity). Binds SDC3 and mediates bone formation by recruiting and attaching osteoblasts/osteoblast precursors to the sites for new bone deposition (By similarity). Binds ALK and promotes cell survival and cell proliferation through MAPK pathway activation (By similarity). Inhibits proliferation and enhances differentiation of neural stem cells by inhibiting FGF2-induced fibroblast growth factor receptor signaling pathway (PubMed:15121180). Mediates regulatory mechanisms in normal hemostasis and in hematopoietic regeneration and in maintaining the balance of myeloid and lymphoid regeneration (PubMed:21791434). In addition may play a role in the female reproductive system, auditory response and the progesterone-induced decidualization pathway (PubMed:16619002, PubMed:17121547, PubMed:28657144).</text>
</comment>
<comment type="subunit">
    <text evidence="1 3">Interacts with ALK and NEK6. Interacts with PTPRZ1 (via chondroitin sulfate groups); promotes formation of homooligomers; oligomerization impairs tyrosine phosphatase activity. Forms a complex with PTPRZ1 and CTNNB1; this complex inactivates PTPRZ1 protein tyrosine phosphatase activity through PTN interaction and stimulates tyrosine phosphorylation of CTNNB1. Interacts with ITGB3 and ITGA5. Forms a complex with PTPRZ1 and integrin alpha-V/beta-3 (ITGAV:ITGB3) that stimulates endothelial cell migration through ITGB3 'Tyr-773' phosphorylation (By similarity). Interacts with SDC3 (via heparan sulfate chains); this interaction mediates the neurite outgrowth-promoting signal from PTN to the cytoskeleton of growing neurites; this interaction mediates osteoblast recruitment. Interacts with GPC2 (via heparan sulfate); this interaction promotes neurite outgrowth through binding of PTN with chondroitin sulfate of proteoglycans, thereby releasing PTPRS of chondroitin sulfate proteoglycans (CSPGs) and leading to binding with heparan sulfate of GPC2 (By similarity).</text>
</comment>
<comment type="subcellular location">
    <subcellularLocation>
        <location evidence="1">Secreted</location>
    </subcellularLocation>
</comment>
<comment type="tissue specificity">
    <text evidence="8 9 10 11 12">Osteoblast and brain (PubMed:1701634, PubMed:1768439). Expressed in the follicular epithelium and granulosa cells of the ovary. Strongly expressed in the uterus of newborn mice, and the degree of expression decreased in one-week-old mice, although the expression continues even in the uteri of adult mice. Expression gradually increases from proestrus to estrus, then decreases sharply, and thereafter gradually increased again (PubMed:17121547). strongly expressed in the cochlea of WT mice 1 week after birth, and then the expression decreased and was undetectable by week 8 after birth (PubMed:16619002). Expressed around the cell soma of osteocytes and apparently captured in the unmineralized interstitial matrix surrounding the cells. Furthermore distributed throughout the intraosseous canalicular porosity, being localized in the unmineralized matrix around the cell processes. Strongly expressed in the innermost layer of the periosteum (PubMed:19442624).</text>
</comment>
<comment type="developmental stage">
    <text evidence="16">NoT detected in the uteri from days 1-3 of pregnancy. On day 4 of pregnancy, localizes in the luminal and glandular epithelium as well as in the uterine stromal cells. On day 5, a high level is observed in the subluminal stroma surrounding the implanting blastocyst, while there is no expression at the inter-implantation sites. From day 6-8 of pregnancy, strongly expressed in the decidua. Expression is gradually increased as the progression of pregnancy and reached a maximum on day 8. Elevated expression is observed at implantation sites from days 5-8 of pregnancy.</text>
</comment>
<comment type="induction">
    <text evidence="10 16">Enhanced up to 3 days after the administration of chorionic gonadotropin to induce ovulation (PubMed:17121547). Up-regulated by progesterone in the uterine stromal cells through cAMP (PubMed:28657144).</text>
</comment>
<comment type="PTM">
    <text evidence="1">Phosphorylated by NEK6.</text>
</comment>
<comment type="disruption phenotype">
    <text evidence="5 6 8 10 14">Homozygous PTN knockout mice are viable and fertile and show no gross anatomical abnormalities. The hippocampal structure as well as basal excitatory synaptic transmission in the area CA1 appear normal. The skeletal structure of homozygous PTN knockout mice develops normally. However, a growth retardation of the weight-bearing bones is observed by 2 months of age. Adult homozygous PTN knockout mice are characterized by low bone formation and osteopenia, as well as resistance to immobilization-dependent bone remodeling (PubMed:11414790, PubMed:12093164). Mice show faster learning in water maze and decreased anxiety in elevated plus-maze test (PubMed:12093164). Homozygous PTN knockout mice exhibit cognitive rigidity, heightened anxiety, behavioral reticence in novel contexts and novel social interactions. Initial learning of spatial and other associative tasks, as well as vascular density in the lateral entorhinal cortex, are normal (PubMed:25000129). PTN and MDK double knockout mice are born in only one third the number expected by Mendelian segregation and 4 weeks after birth weigh about half as much as wild-type mice. Most of the female are infertile. Both male and female one-month-old mice show a defect in spontaneous locomotive activity of 50-60% of that of wild-type mice. Although the difference in activity decrease with age, the activity of 3-month-old male double knockout mice is still about 80% of that of the wild-type mice. The diestrus and proestrus periods are long and the estrus period is short. Furthermore, vaginal abnormality is found in about half of the double deficient mice (PubMed:17121547). PTN and MDK double knockout mice have a deficit of auditory response (PubMed:16619002).</text>
</comment>
<comment type="similarity">
    <text evidence="19">Belongs to the pleiotrophin family.</text>
</comment>
<keyword id="KW-1015">Disulfide bond</keyword>
<keyword id="KW-0339">Growth factor</keyword>
<keyword id="KW-0358">Heparin-binding</keyword>
<keyword id="KW-0497">Mitogen</keyword>
<keyword id="KW-1185">Reference proteome</keyword>
<keyword id="KW-0964">Secreted</keyword>
<keyword id="KW-0732">Signal</keyword>
<name>PTN_MOUSE</name>
<sequence length="168" mass="18869">MSSQQYQQQRRKFAAAFLALIFILAAVDTAEAGKKEKPEKKVKKSDCGEWQWSVCVPTSGDCGLGTREGTRTGAECKQTMKTQRCKIPCNWKKQFGAECKYQFQAWGECDLNTALKTRTGSLKRALHNADCQKTVTISKPCGKLTKPKPQAESKKKKKEGKKQEKMLD</sequence>
<evidence type="ECO:0000250" key="1">
    <source>
        <dbReference type="UniProtKB" id="P21246"/>
    </source>
</evidence>
<evidence type="ECO:0000250" key="2">
    <source>
        <dbReference type="UniProtKB" id="P21782"/>
    </source>
</evidence>
<evidence type="ECO:0000250" key="3">
    <source>
        <dbReference type="UniProtKB" id="P63090"/>
    </source>
</evidence>
<evidence type="ECO:0000256" key="4">
    <source>
        <dbReference type="SAM" id="MobiDB-lite"/>
    </source>
</evidence>
<evidence type="ECO:0000269" key="5">
    <source>
    </source>
</evidence>
<evidence type="ECO:0000269" key="6">
    <source>
    </source>
</evidence>
<evidence type="ECO:0000269" key="7">
    <source>
    </source>
</evidence>
<evidence type="ECO:0000269" key="8">
    <source>
    </source>
</evidence>
<evidence type="ECO:0000269" key="9">
    <source>
    </source>
</evidence>
<evidence type="ECO:0000269" key="10">
    <source>
    </source>
</evidence>
<evidence type="ECO:0000269" key="11">
    <source>
    </source>
</evidence>
<evidence type="ECO:0000269" key="12">
    <source>
    </source>
</evidence>
<evidence type="ECO:0000269" key="13">
    <source>
    </source>
</evidence>
<evidence type="ECO:0000269" key="14">
    <source>
    </source>
</evidence>
<evidence type="ECO:0000269" key="15">
    <source>
    </source>
</evidence>
<evidence type="ECO:0000269" key="16">
    <source>
    </source>
</evidence>
<evidence type="ECO:0000269" key="17">
    <source>
    </source>
</evidence>
<evidence type="ECO:0000303" key="18">
    <source>
    </source>
</evidence>
<evidence type="ECO:0000305" key="19"/>
<evidence type="ECO:0000312" key="20">
    <source>
        <dbReference type="MGI" id="MGI:97804"/>
    </source>
</evidence>
<protein>
    <recommendedName>
        <fullName evidence="1">Pleiotrophin</fullName>
        <shortName evidence="1">PTN</shortName>
    </recommendedName>
    <alternativeName>
        <fullName evidence="1">Heparin-binding brain mitogen</fullName>
        <shortName evidence="1">HBBM</shortName>
    </alternativeName>
    <alternativeName>
        <fullName evidence="2">Heparin-binding growth factor 8</fullName>
        <shortName evidence="2">HBGF-8</shortName>
    </alternativeName>
    <alternativeName>
        <fullName evidence="3">Heparin-binding growth-associated molecule</fullName>
        <shortName evidence="3">HB-GAM</shortName>
    </alternativeName>
    <alternativeName>
        <fullName evidence="1">Heparin-binding neutrophic factor</fullName>
        <shortName evidence="1">HBNF</shortName>
    </alternativeName>
    <alternativeName>
        <fullName evidence="18">Osteoblast-specific factor 1</fullName>
        <shortName evidence="18">OSF-1</shortName>
    </alternativeName>
</protein>
<reference key="1">
    <citation type="journal article" date="1990" name="Biochem. Biophys. Res. Commun.">
        <title>Isolation of mouse and human cDNA clones encoding a protein expressed specifically in osteoblasts and brain tissues.</title>
        <authorList>
            <person name="Tezuka K.I."/>
            <person name="Takeshita S."/>
            <person name="Hakeda Y."/>
            <person name="Kumegawa M."/>
            <person name="Kikuno R."/>
            <person name="Hashimoto-Gotoh T."/>
        </authorList>
    </citation>
    <scope>NUCLEOTIDE SEQUENCE [MRNA]</scope>
    <scope>TISSUE SPECIFICITY</scope>
</reference>
<reference key="2">
    <citation type="journal article" date="1992" name="DNA Cell Biol.">
        <title>Genomic organization of the mouse OSF-1 gene.</title>
        <authorList>
            <person name="Katoh K."/>
            <person name="Takeshita S."/>
            <person name="Sato M."/>
            <person name="Ito T."/>
            <person name="Amann E."/>
        </authorList>
    </citation>
    <scope>NUCLEOTIDE SEQUENCE [GENOMIC DNA]</scope>
    <source>
        <strain>DBA/2J</strain>
        <tissue>Liver</tissue>
    </source>
</reference>
<reference key="3">
    <citation type="journal article" date="2005" name="Science">
        <title>The transcriptional landscape of the mammalian genome.</title>
        <authorList>
            <person name="Carninci P."/>
            <person name="Kasukawa T."/>
            <person name="Katayama S."/>
            <person name="Gough J."/>
            <person name="Frith M.C."/>
            <person name="Maeda N."/>
            <person name="Oyama R."/>
            <person name="Ravasi T."/>
            <person name="Lenhard B."/>
            <person name="Wells C."/>
            <person name="Kodzius R."/>
            <person name="Shimokawa K."/>
            <person name="Bajic V.B."/>
            <person name="Brenner S.E."/>
            <person name="Batalov S."/>
            <person name="Forrest A.R."/>
            <person name="Zavolan M."/>
            <person name="Davis M.J."/>
            <person name="Wilming L.G."/>
            <person name="Aidinis V."/>
            <person name="Allen J.E."/>
            <person name="Ambesi-Impiombato A."/>
            <person name="Apweiler R."/>
            <person name="Aturaliya R.N."/>
            <person name="Bailey T.L."/>
            <person name="Bansal M."/>
            <person name="Baxter L."/>
            <person name="Beisel K.W."/>
            <person name="Bersano T."/>
            <person name="Bono H."/>
            <person name="Chalk A.M."/>
            <person name="Chiu K.P."/>
            <person name="Choudhary V."/>
            <person name="Christoffels A."/>
            <person name="Clutterbuck D.R."/>
            <person name="Crowe M.L."/>
            <person name="Dalla E."/>
            <person name="Dalrymple B.P."/>
            <person name="de Bono B."/>
            <person name="Della Gatta G."/>
            <person name="di Bernardo D."/>
            <person name="Down T."/>
            <person name="Engstrom P."/>
            <person name="Fagiolini M."/>
            <person name="Faulkner G."/>
            <person name="Fletcher C.F."/>
            <person name="Fukushima T."/>
            <person name="Furuno M."/>
            <person name="Futaki S."/>
            <person name="Gariboldi M."/>
            <person name="Georgii-Hemming P."/>
            <person name="Gingeras T.R."/>
            <person name="Gojobori T."/>
            <person name="Green R.E."/>
            <person name="Gustincich S."/>
            <person name="Harbers M."/>
            <person name="Hayashi Y."/>
            <person name="Hensch T.K."/>
            <person name="Hirokawa N."/>
            <person name="Hill D."/>
            <person name="Huminiecki L."/>
            <person name="Iacono M."/>
            <person name="Ikeo K."/>
            <person name="Iwama A."/>
            <person name="Ishikawa T."/>
            <person name="Jakt M."/>
            <person name="Kanapin A."/>
            <person name="Katoh M."/>
            <person name="Kawasawa Y."/>
            <person name="Kelso J."/>
            <person name="Kitamura H."/>
            <person name="Kitano H."/>
            <person name="Kollias G."/>
            <person name="Krishnan S.P."/>
            <person name="Kruger A."/>
            <person name="Kummerfeld S.K."/>
            <person name="Kurochkin I.V."/>
            <person name="Lareau L.F."/>
            <person name="Lazarevic D."/>
            <person name="Lipovich L."/>
            <person name="Liu J."/>
            <person name="Liuni S."/>
            <person name="McWilliam S."/>
            <person name="Madan Babu M."/>
            <person name="Madera M."/>
            <person name="Marchionni L."/>
            <person name="Matsuda H."/>
            <person name="Matsuzawa S."/>
            <person name="Miki H."/>
            <person name="Mignone F."/>
            <person name="Miyake S."/>
            <person name="Morris K."/>
            <person name="Mottagui-Tabar S."/>
            <person name="Mulder N."/>
            <person name="Nakano N."/>
            <person name="Nakauchi H."/>
            <person name="Ng P."/>
            <person name="Nilsson R."/>
            <person name="Nishiguchi S."/>
            <person name="Nishikawa S."/>
            <person name="Nori F."/>
            <person name="Ohara O."/>
            <person name="Okazaki Y."/>
            <person name="Orlando V."/>
            <person name="Pang K.C."/>
            <person name="Pavan W.J."/>
            <person name="Pavesi G."/>
            <person name="Pesole G."/>
            <person name="Petrovsky N."/>
            <person name="Piazza S."/>
            <person name="Reed J."/>
            <person name="Reid J.F."/>
            <person name="Ring B.Z."/>
            <person name="Ringwald M."/>
            <person name="Rost B."/>
            <person name="Ruan Y."/>
            <person name="Salzberg S.L."/>
            <person name="Sandelin A."/>
            <person name="Schneider C."/>
            <person name="Schoenbach C."/>
            <person name="Sekiguchi K."/>
            <person name="Semple C.A."/>
            <person name="Seno S."/>
            <person name="Sessa L."/>
            <person name="Sheng Y."/>
            <person name="Shibata Y."/>
            <person name="Shimada H."/>
            <person name="Shimada K."/>
            <person name="Silva D."/>
            <person name="Sinclair B."/>
            <person name="Sperling S."/>
            <person name="Stupka E."/>
            <person name="Sugiura K."/>
            <person name="Sultana R."/>
            <person name="Takenaka Y."/>
            <person name="Taki K."/>
            <person name="Tammoja K."/>
            <person name="Tan S.L."/>
            <person name="Tang S."/>
            <person name="Taylor M.S."/>
            <person name="Tegner J."/>
            <person name="Teichmann S.A."/>
            <person name="Ueda H.R."/>
            <person name="van Nimwegen E."/>
            <person name="Verardo R."/>
            <person name="Wei C.L."/>
            <person name="Yagi K."/>
            <person name="Yamanishi H."/>
            <person name="Zabarovsky E."/>
            <person name="Zhu S."/>
            <person name="Zimmer A."/>
            <person name="Hide W."/>
            <person name="Bult C."/>
            <person name="Grimmond S.M."/>
            <person name="Teasdale R.D."/>
            <person name="Liu E.T."/>
            <person name="Brusic V."/>
            <person name="Quackenbush J."/>
            <person name="Wahlestedt C."/>
            <person name="Mattick J.S."/>
            <person name="Hume D.A."/>
            <person name="Kai C."/>
            <person name="Sasaki D."/>
            <person name="Tomaru Y."/>
            <person name="Fukuda S."/>
            <person name="Kanamori-Katayama M."/>
            <person name="Suzuki M."/>
            <person name="Aoki J."/>
            <person name="Arakawa T."/>
            <person name="Iida J."/>
            <person name="Imamura K."/>
            <person name="Itoh M."/>
            <person name="Kato T."/>
            <person name="Kawaji H."/>
            <person name="Kawagashira N."/>
            <person name="Kawashima T."/>
            <person name="Kojima M."/>
            <person name="Kondo S."/>
            <person name="Konno H."/>
            <person name="Nakano K."/>
            <person name="Ninomiya N."/>
            <person name="Nishio T."/>
            <person name="Okada M."/>
            <person name="Plessy C."/>
            <person name="Shibata K."/>
            <person name="Shiraki T."/>
            <person name="Suzuki S."/>
            <person name="Tagami M."/>
            <person name="Waki K."/>
            <person name="Watahiki A."/>
            <person name="Okamura-Oho Y."/>
            <person name="Suzuki H."/>
            <person name="Kawai J."/>
            <person name="Hayashizaki Y."/>
        </authorList>
    </citation>
    <scope>NUCLEOTIDE SEQUENCE [LARGE SCALE MRNA]</scope>
    <source>
        <strain>C57BL/6J</strain>
    </source>
</reference>
<reference key="4">
    <citation type="journal article" date="2004" name="Genome Res.">
        <title>The status, quality, and expansion of the NIH full-length cDNA project: the Mammalian Gene Collection (MGC).</title>
        <authorList>
            <consortium name="The MGC Project Team"/>
        </authorList>
    </citation>
    <scope>NUCLEOTIDE SEQUENCE [LARGE SCALE MRNA]</scope>
    <source>
        <strain>C57BL/6J</strain>
        <tissue>Mammary gland</tissue>
        <tissue>Olfactory epithelium</tissue>
    </source>
</reference>
<reference key="5">
    <citation type="journal article" date="1992" name="Biochem. Biophys. Res. Commun.">
        <title>Similarity of the genomic structure between the two members in a new family of heparin-binding factors.</title>
        <authorList>
            <person name="Naito A."/>
            <person name="Yoshikura H."/>
            <person name="Iwamoto A."/>
        </authorList>
    </citation>
    <scope>NUCLEOTIDE SEQUENCE [GENOMIC DNA] OF 1-5; 34-44; 92-102; 146-156 AND 165-168</scope>
    <scope>GENOMIC ORGANIZATION</scope>
</reference>
<reference key="6">
    <citation type="journal article" date="1991" name="Growth Factors">
        <title>Cloning, characterization and developmental regulation of two members of a novel human gene family of neurite outgrowth-promoting proteins.</title>
        <authorList>
            <person name="Kretschmer P.J."/>
            <person name="Fairhurst J.L."/>
            <person name="Decker M.M."/>
            <person name="Chan C.P."/>
            <person name="Gluzman Y."/>
            <person name="Boehlen P."/>
            <person name="Kovesdi I."/>
        </authorList>
    </citation>
    <scope>TISSUE SPECIFICITY</scope>
</reference>
<reference key="7">
    <citation type="journal article" date="2001" name="Mol. Cell. Neurosci.">
        <title>Enhanced hippocampal long-term potentiation in mice lacking heparin-binding growth-associated molecule.</title>
        <authorList>
            <person name="Amet L.E."/>
            <person name="Lauri S.E."/>
            <person name="Hienola A."/>
            <person name="Croll S.D."/>
            <person name="Lu Y."/>
            <person name="Levorse J.M."/>
            <person name="Prabhakaran B."/>
            <person name="Taira T."/>
            <person name="Rauvala H."/>
            <person name="Vogt T.F."/>
        </authorList>
    </citation>
    <scope>DISRUPTION PHENOTYPE</scope>
    <scope>FUNCTION</scope>
</reference>
<reference key="8">
    <citation type="journal article" date="2002" name="Mol. Cell. Neurosci.">
        <title>Role of heparin-binding growth-associated molecule (HB-GAM) in hippocampal LTP and spatial learning revealed by studies on overexpressing and knockout mice.</title>
        <authorList>
            <person name="Pavlov I."/>
            <person name="Voikar V."/>
            <person name="Kaksonen M."/>
            <person name="Lauri S.E."/>
            <person name="Hienola A."/>
            <person name="Taira T."/>
            <person name="Rauvala H."/>
        </authorList>
    </citation>
    <scope>DISRUPTION PHENOTYPE</scope>
    <scope>FUNCTION</scope>
</reference>
<reference key="9">
    <citation type="journal article" date="2004" name="Mol. Cell. Neurosci.">
        <title>HB-GAM inhibits proliferation and enhances differentiation of neural stem cells.</title>
        <authorList>
            <person name="Hienola A."/>
            <person name="Pekkanen M."/>
            <person name="Raulo E."/>
            <person name="Vanttola P."/>
            <person name="Rauvala H."/>
        </authorList>
    </citation>
    <scope>FUNCTION</scope>
</reference>
<reference key="10">
    <citation type="journal article" date="2006" name="Genes Cells">
        <title>Female infertility in mice deficient in midkine and pleiotrophin, which form a distinct family of growth factors.</title>
        <authorList>
            <person name="Muramatsu H."/>
            <person name="Zou P."/>
            <person name="Kurosawa N."/>
            <person name="Ichihara-Tanaka K."/>
            <person name="Maruyama K."/>
            <person name="Inoh K."/>
            <person name="Sakai T."/>
            <person name="Chen L."/>
            <person name="Sato M."/>
            <person name="Muramatsu T."/>
        </authorList>
    </citation>
    <scope>DISRUPTION PHENOTYPE</scope>
    <scope>TISSUE SPECIFICITY</scope>
    <scope>INDUCTION</scope>
    <scope>FUNCTION</scope>
</reference>
<reference key="11">
    <citation type="journal article" date="2006" name="Lab. Invest.">
        <title>Mice doubly deficient in the midkine and pleiotrophin genes exhibit deficits in the expression of beta-tectorin gene and in auditory response.</title>
        <authorList>
            <person name="Zou P."/>
            <person name="Muramatsu H."/>
            <person name="Sone M."/>
            <person name="Hayashi H."/>
            <person name="Nakashima T."/>
            <person name="Muramatsu T."/>
        </authorList>
    </citation>
    <scope>TISSUE SPECIFICITY</scope>
    <scope>DISRUPTION PHENOTYPE</scope>
    <scope>FUNCTION</scope>
</reference>
<reference key="12">
    <citation type="journal article" date="2009" name="Bone">
        <title>Osteocyte-derived HB-GAM (pleiotrophin) is associated with bone formation and mechanical loading.</title>
        <authorList>
            <person name="Imai S."/>
            <person name="Heino T.J."/>
            <person name="Hienola A."/>
            <person name="Kurata K."/>
            <person name="Bueki K."/>
            <person name="Matsusue Y."/>
            <person name="Vaeaenaenen H.K."/>
            <person name="Rauvala H."/>
        </authorList>
    </citation>
    <scope>TISSUE SPECIFICITY</scope>
    <scope>FUNCTION</scope>
</reference>
<reference key="13">
    <citation type="journal article" date="2010" name="Cell">
        <title>A tissue-specific atlas of mouse protein phosphorylation and expression.</title>
        <authorList>
            <person name="Huttlin E.L."/>
            <person name="Jedrychowski M.P."/>
            <person name="Elias J.E."/>
            <person name="Goswami T."/>
            <person name="Rad R."/>
            <person name="Beausoleil S.A."/>
            <person name="Villen J."/>
            <person name="Haas W."/>
            <person name="Sowa M.E."/>
            <person name="Gygi S.P."/>
        </authorList>
    </citation>
    <scope>IDENTIFICATION BY MASS SPECTROMETRY [LARGE SCALE ANALYSIS]</scope>
    <source>
        <tissue>Brain</tissue>
    </source>
</reference>
<reference key="14">
    <citation type="journal article" date="2011" name="Blood">
        <title>Stromal pleiotrophin regulates repopulation behavior of hematopoietic stem cells.</title>
        <authorList>
            <person name="Istvanffy R."/>
            <person name="Kroeger M."/>
            <person name="Eckl C."/>
            <person name="Gitzelmann S."/>
            <person name="Vilne B."/>
            <person name="Bock F."/>
            <person name="Graf S."/>
            <person name="Schiemann M."/>
            <person name="Keller U.B."/>
            <person name="Peschel C."/>
            <person name="Oostendorp R.A."/>
        </authorList>
    </citation>
    <scope>FUNCTION</scope>
</reference>
<reference key="15">
    <citation type="journal article" date="2014" name="PLoS ONE">
        <title>Behavioral and neuroanatomical abnormalities in pleiotrophin knockout mice.</title>
        <authorList>
            <person name="Krellman J.W."/>
            <person name="Ruiz H.H."/>
            <person name="Marciano V.A."/>
            <person name="Mondrow B."/>
            <person name="Croll S.D."/>
        </authorList>
    </citation>
    <scope>DISRUPTION PHENOTYPE</scope>
    <scope>FUNCTION</scope>
</reference>
<reference key="16">
    <citation type="journal article" date="2016" name="J. Biol. Chem.">
        <title>Role of Chondroitin Sulfate (CS) Modification in the Regulation of Protein-tyrosine Phosphatase Receptor Type Z (PTPRZ) Activity: PLEIOTROPHIN-PTPRZ-A SIGNALING IS INVOLVED IN OLIGODENDROCYTE DIFFERENTIATION.</title>
        <authorList>
            <person name="Kuboyama K."/>
            <person name="Fujikawa A."/>
            <person name="Suzuki R."/>
            <person name="Tanga N."/>
            <person name="Noda M."/>
        </authorList>
    </citation>
    <scope>FUNCTION</scope>
</reference>
<reference key="17">
    <citation type="journal article" date="2018" name="J. Cell. Physiol.">
        <title>Ptn functions downstream of C/EBPbeta to mediate the effects of cAMP on uterine stromal cell differentiation through targeting Hand2 in response to progesterone.</title>
        <authorList>
            <person name="Yu H.F."/>
            <person name="Tao R."/>
            <person name="Yang Z.Q."/>
            <person name="Wang K."/>
            <person name="Yue Z.P."/>
            <person name="Guo B."/>
        </authorList>
    </citation>
    <scope>DEVELOPMENTAL STAGE</scope>
    <scope>INDUCTION</scope>
    <scope>FUNCTION</scope>
</reference>
<reference key="18">
    <citation type="journal article" date="2019" name="Neuron">
        <title>Neural Stem Cells Behave as a Functional Niche for the Maturation of Newborn Neurons through the Secretion of PTN.</title>
        <authorList>
            <person name="Tang C."/>
            <person name="Wang M."/>
            <person name="Wang P."/>
            <person name="Wang L."/>
            <person name="Wu Q."/>
            <person name="Guo W."/>
        </authorList>
    </citation>
    <scope>FUNCTION</scope>
</reference>
<organism>
    <name type="scientific">Mus musculus</name>
    <name type="common">Mouse</name>
    <dbReference type="NCBI Taxonomy" id="10090"/>
    <lineage>
        <taxon>Eukaryota</taxon>
        <taxon>Metazoa</taxon>
        <taxon>Chordata</taxon>
        <taxon>Craniata</taxon>
        <taxon>Vertebrata</taxon>
        <taxon>Euteleostomi</taxon>
        <taxon>Mammalia</taxon>
        <taxon>Eutheria</taxon>
        <taxon>Euarchontoglires</taxon>
        <taxon>Glires</taxon>
        <taxon>Rodentia</taxon>
        <taxon>Myomorpha</taxon>
        <taxon>Muroidea</taxon>
        <taxon>Muridae</taxon>
        <taxon>Murinae</taxon>
        <taxon>Mus</taxon>
        <taxon>Mus</taxon>
    </lineage>
</organism>
<gene>
    <name evidence="20" type="primary">Ptn</name>
</gene>